<evidence type="ECO:0000250" key="1"/>
<evidence type="ECO:0000255" key="2"/>
<evidence type="ECO:0000255" key="3">
    <source>
        <dbReference type="PROSITE-ProRule" id="PRU10095"/>
    </source>
</evidence>
<evidence type="ECO:0000269" key="4">
    <source>
    </source>
</evidence>
<evidence type="ECO:0000269" key="5">
    <source>
    </source>
</evidence>
<evidence type="ECO:0000269" key="6">
    <source>
    </source>
</evidence>
<evidence type="ECO:0000269" key="7">
    <source>
    </source>
</evidence>
<evidence type="ECO:0000269" key="8">
    <source>
    </source>
</evidence>
<evidence type="ECO:0000269" key="9">
    <source>
    </source>
</evidence>
<evidence type="ECO:0000269" key="10">
    <source>
    </source>
</evidence>
<evidence type="ECO:0000269" key="11">
    <source>
    </source>
</evidence>
<evidence type="ECO:0000305" key="12"/>
<gene>
    <name type="primary">OCT1</name>
    <name type="synonym">MIP1</name>
    <name type="ordered locus">YKL134C</name>
</gene>
<keyword id="KW-0378">Hydrolase</keyword>
<keyword id="KW-0479">Metal-binding</keyword>
<keyword id="KW-0482">Metalloprotease</keyword>
<keyword id="KW-0496">Mitochondrion</keyword>
<keyword id="KW-0645">Protease</keyword>
<keyword id="KW-1185">Reference proteome</keyword>
<keyword id="KW-0809">Transit peptide</keyword>
<keyword id="KW-0862">Zinc</keyword>
<feature type="transit peptide" description="Mitochondrion" evidence="2">
    <location>
        <begin position="1"/>
        <end position="37"/>
    </location>
</feature>
<feature type="chain" id="PRO_0000028583" description="Mitochondrial intermediate peptidase">
    <location>
        <begin position="38"/>
        <end position="772"/>
    </location>
</feature>
<feature type="active site" evidence="3">
    <location>
        <position position="559"/>
    </location>
</feature>
<feature type="binding site" evidence="3">
    <location>
        <position position="558"/>
    </location>
    <ligand>
        <name>Zn(2+)</name>
        <dbReference type="ChEBI" id="CHEBI:29105"/>
        <note>catalytic</note>
    </ligand>
</feature>
<feature type="binding site" evidence="3">
    <location>
        <position position="562"/>
    </location>
    <ligand>
        <name>Zn(2+)</name>
        <dbReference type="ChEBI" id="CHEBI:29105"/>
        <note>catalytic</note>
    </ligand>
</feature>
<feature type="binding site" evidence="12">
    <location>
        <position position="587"/>
    </location>
    <ligand>
        <name>Zn(2+)</name>
        <dbReference type="ChEBI" id="CHEBI:29105"/>
        <note>catalytic</note>
    </ligand>
</feature>
<feature type="mutagenesis site" description="Affects protein stability, but has no effect on peptidase activity." evidence="11">
    <original>C</original>
    <variation>S</variation>
    <variation>V</variation>
    <location>
        <position position="131"/>
    </location>
</feature>
<feature type="mutagenesis site" description="Affects protein stability." evidence="11">
    <original>F</original>
    <variation>R</variation>
    <location>
        <position position="557"/>
    </location>
</feature>
<feature type="mutagenesis site" description="Abolishes proteolytic activity." evidence="11">
    <original>H</original>
    <variation>R</variation>
    <location>
        <position position="558"/>
    </location>
</feature>
<feature type="mutagenesis site" description="Abolishes proteolytic activity." evidence="11">
    <original>E</original>
    <variation>D</variation>
    <location>
        <position position="559"/>
    </location>
</feature>
<feature type="mutagenesis site" description="Affects protein stability." evidence="11">
    <original>G</original>
    <variation>L</variation>
    <location>
        <position position="561"/>
    </location>
</feature>
<feature type="mutagenesis site" description="Abolishes proteolytic activity." evidence="11">
    <original>H</original>
    <variation>R</variation>
    <location>
        <position position="562"/>
    </location>
</feature>
<feature type="mutagenesis site" description="Temperature sensitive; abolishes proteolytic activity for RIP1, but not for COX4." evidence="11">
    <original>H</original>
    <variation>R</variation>
    <location>
        <position position="565"/>
    </location>
</feature>
<feature type="mutagenesis site" description="Temperature sensitive; abolishes proteolytic activity for RIP1, but not for COX4." evidence="11">
    <original>G</original>
    <variation>L</variation>
    <location>
        <position position="578"/>
    </location>
</feature>
<feature type="mutagenesis site" description="Affects protein stability, but has no effect on peptidase activity." evidence="11">
    <original>C</original>
    <variation>S</variation>
    <variation>V</variation>
    <location>
        <position position="581"/>
    </location>
</feature>
<feature type="mutagenesis site" description="No effect." evidence="11">
    <original>D</original>
    <variation>E</variation>
    <location>
        <position position="584"/>
    </location>
</feature>
<feature type="mutagenesis site" description="Abolishes proteolytic activity." evidence="11">
    <original>E</original>
    <variation>D</variation>
    <location>
        <position position="587"/>
    </location>
</feature>
<feature type="mutagenesis site" description="No effect." evidence="11">
    <original>P</original>
    <variation>L</variation>
    <location>
        <position position="589"/>
    </location>
</feature>
<feature type="mutagenesis site" description="Affects protein stability." evidence="11">
    <original>S</original>
    <variation>Y</variation>
    <location>
        <position position="590"/>
    </location>
</feature>
<feature type="mutagenesis site" description="No effect." evidence="11">
    <original>E</original>
    <variation>D</variation>
    <location>
        <position position="594"/>
    </location>
</feature>
<feature type="sequence conflict" description="In Ref. 2; CAA81975." evidence="12" ref="2">
    <original>MAKNPKDV</original>
    <variation>WQDRRC</variation>
    <location>
        <begin position="343"/>
        <end position="350"/>
    </location>
</feature>
<feature type="sequence conflict" description="In Ref. 2; CAA81975." evidence="12" ref="2">
    <original>YGATYYSYL</original>
    <variation>SGQLITATY</variation>
    <location>
        <begin position="694"/>
        <end position="702"/>
    </location>
</feature>
<dbReference type="EC" id="3.4.24.59"/>
<dbReference type="EMBL" id="U10243">
    <property type="protein sequence ID" value="AAA21278.1"/>
    <property type="molecule type" value="Genomic_DNA"/>
</dbReference>
<dbReference type="EMBL" id="Z28134">
    <property type="protein sequence ID" value="CAA81975.1"/>
    <property type="molecule type" value="Genomic_DNA"/>
</dbReference>
<dbReference type="EMBL" id="BK006944">
    <property type="protein sequence ID" value="DAA09028.2"/>
    <property type="molecule type" value="Genomic_DNA"/>
</dbReference>
<dbReference type="PIR" id="S37963">
    <property type="entry name" value="S37963"/>
</dbReference>
<dbReference type="RefSeq" id="NP_012788.2">
    <property type="nucleotide sequence ID" value="NM_001179700.2"/>
</dbReference>
<dbReference type="SMR" id="P35999"/>
<dbReference type="BioGRID" id="34002">
    <property type="interactions" value="85"/>
</dbReference>
<dbReference type="DIP" id="DIP-2670N"/>
<dbReference type="FunCoup" id="P35999">
    <property type="interactions" value="753"/>
</dbReference>
<dbReference type="IntAct" id="P35999">
    <property type="interactions" value="4"/>
</dbReference>
<dbReference type="MINT" id="P35999"/>
<dbReference type="STRING" id="4932.YKL134C"/>
<dbReference type="MEROPS" id="M03.006"/>
<dbReference type="PaxDb" id="4932-YKL134C"/>
<dbReference type="PeptideAtlas" id="P35999"/>
<dbReference type="EnsemblFungi" id="YKL134C_mRNA">
    <property type="protein sequence ID" value="YKL134C"/>
    <property type="gene ID" value="YKL134C"/>
</dbReference>
<dbReference type="GeneID" id="853724"/>
<dbReference type="KEGG" id="sce:YKL134C"/>
<dbReference type="AGR" id="SGD:S000001617"/>
<dbReference type="SGD" id="S000001617">
    <property type="gene designation" value="OCT1"/>
</dbReference>
<dbReference type="VEuPathDB" id="FungiDB:YKL134C"/>
<dbReference type="eggNOG" id="KOG2090">
    <property type="taxonomic scope" value="Eukaryota"/>
</dbReference>
<dbReference type="GeneTree" id="ENSGT00950000183171"/>
<dbReference type="HOGENOM" id="CLU_001805_0_0_1"/>
<dbReference type="InParanoid" id="P35999"/>
<dbReference type="OMA" id="ALMFEYM"/>
<dbReference type="OrthoDB" id="17530at2759"/>
<dbReference type="BioCyc" id="YEAST:YKL134C-MONOMER"/>
<dbReference type="BioGRID-ORCS" id="853724">
    <property type="hits" value="5 hits in 10 CRISPR screens"/>
</dbReference>
<dbReference type="PRO" id="PR:P35999"/>
<dbReference type="Proteomes" id="UP000002311">
    <property type="component" value="Chromosome XI"/>
</dbReference>
<dbReference type="RNAct" id="P35999">
    <property type="molecule type" value="protein"/>
</dbReference>
<dbReference type="GO" id="GO:0005759">
    <property type="term" value="C:mitochondrial matrix"/>
    <property type="evidence" value="ECO:0000314"/>
    <property type="project" value="SGD"/>
</dbReference>
<dbReference type="GO" id="GO:0005739">
    <property type="term" value="C:mitochondrion"/>
    <property type="evidence" value="ECO:0007005"/>
    <property type="project" value="SGD"/>
</dbReference>
<dbReference type="GO" id="GO:0046872">
    <property type="term" value="F:metal ion binding"/>
    <property type="evidence" value="ECO:0007669"/>
    <property type="project" value="UniProtKB-KW"/>
</dbReference>
<dbReference type="GO" id="GO:0004222">
    <property type="term" value="F:metalloendopeptidase activity"/>
    <property type="evidence" value="ECO:0000314"/>
    <property type="project" value="SGD"/>
</dbReference>
<dbReference type="GO" id="GO:0006879">
    <property type="term" value="P:intracellular iron ion homeostasis"/>
    <property type="evidence" value="ECO:0000315"/>
    <property type="project" value="SGD"/>
</dbReference>
<dbReference type="GO" id="GO:0006518">
    <property type="term" value="P:peptide metabolic process"/>
    <property type="evidence" value="ECO:0000318"/>
    <property type="project" value="GO_Central"/>
</dbReference>
<dbReference type="GO" id="GO:0006627">
    <property type="term" value="P:protein processing involved in protein targeting to mitochondrion"/>
    <property type="evidence" value="ECO:0000315"/>
    <property type="project" value="SGD"/>
</dbReference>
<dbReference type="GO" id="GO:0050821">
    <property type="term" value="P:protein stabilization"/>
    <property type="evidence" value="ECO:0000315"/>
    <property type="project" value="SGD"/>
</dbReference>
<dbReference type="CDD" id="cd06457">
    <property type="entry name" value="M3A_MIP"/>
    <property type="match status" value="1"/>
</dbReference>
<dbReference type="FunFam" id="3.40.390.10:FF:000029">
    <property type="entry name" value="Mitochondrial intermediate peptidase 1"/>
    <property type="match status" value="1"/>
</dbReference>
<dbReference type="Gene3D" id="3.40.390.10">
    <property type="entry name" value="Collagenase (Catalytic Domain)"/>
    <property type="match status" value="1"/>
</dbReference>
<dbReference type="Gene3D" id="1.10.1370.10">
    <property type="entry name" value="Neurolysin, domain 3"/>
    <property type="match status" value="1"/>
</dbReference>
<dbReference type="InterPro" id="IPR033851">
    <property type="entry name" value="M3A_MIP"/>
</dbReference>
<dbReference type="InterPro" id="IPR024079">
    <property type="entry name" value="MetalloPept_cat_dom_sf"/>
</dbReference>
<dbReference type="InterPro" id="IPR024077">
    <property type="entry name" value="Neurolysin/TOP_dom2"/>
</dbReference>
<dbReference type="InterPro" id="IPR045090">
    <property type="entry name" value="Pept_M3A_M3B"/>
</dbReference>
<dbReference type="InterPro" id="IPR001567">
    <property type="entry name" value="Pept_M3A_M3B_dom"/>
</dbReference>
<dbReference type="PANTHER" id="PTHR11804:SF79">
    <property type="entry name" value="MITOCHONDRIAL INTERMEDIATE PEPTIDASE"/>
    <property type="match status" value="1"/>
</dbReference>
<dbReference type="PANTHER" id="PTHR11804">
    <property type="entry name" value="PROTEASE M3 THIMET OLIGOPEPTIDASE-RELATED"/>
    <property type="match status" value="1"/>
</dbReference>
<dbReference type="Pfam" id="PF01432">
    <property type="entry name" value="Peptidase_M3"/>
    <property type="match status" value="1"/>
</dbReference>
<dbReference type="SUPFAM" id="SSF55486">
    <property type="entry name" value="Metalloproteases ('zincins'), catalytic domain"/>
    <property type="match status" value="1"/>
</dbReference>
<dbReference type="PROSITE" id="PS00142">
    <property type="entry name" value="ZINC_PROTEASE"/>
    <property type="match status" value="1"/>
</dbReference>
<protein>
    <recommendedName>
        <fullName>Mitochondrial intermediate peptidase</fullName>
        <shortName>MIP</shortName>
        <ecNumber>3.4.24.59</ecNumber>
    </recommendedName>
</protein>
<reference key="1">
    <citation type="journal article" date="1994" name="Mol. Cell. Biol.">
        <title>MIP1, a new yeast gene homologous to the rat mitochondrial intermediate peptidase gene, is required for oxidative metabolism in Saccharomyces cerevisiae.</title>
        <authorList>
            <person name="Isaya G."/>
            <person name="Miklos D."/>
            <person name="Rollins R.A."/>
        </authorList>
    </citation>
    <scope>NUCLEOTIDE SEQUENCE [GENOMIC DNA]</scope>
    <scope>FUNCTION</scope>
</reference>
<reference key="2">
    <citation type="journal article" date="1994" name="Nature">
        <title>Complete DNA sequence of yeast chromosome XI.</title>
        <authorList>
            <person name="Dujon B."/>
            <person name="Alexandraki D."/>
            <person name="Andre B."/>
            <person name="Ansorge W."/>
            <person name="Baladron V."/>
            <person name="Ballesta J.P.G."/>
            <person name="Banrevi A."/>
            <person name="Bolle P.-A."/>
            <person name="Bolotin-Fukuhara M."/>
            <person name="Bossier P."/>
            <person name="Bou G."/>
            <person name="Boyer J."/>
            <person name="Buitrago M.J."/>
            <person name="Cheret G."/>
            <person name="Colleaux L."/>
            <person name="Daignan-Fornier B."/>
            <person name="del Rey F."/>
            <person name="Dion C."/>
            <person name="Domdey H."/>
            <person name="Duesterhoeft A."/>
            <person name="Duesterhus S."/>
            <person name="Entian K.-D."/>
            <person name="Erfle H."/>
            <person name="Esteban P.F."/>
            <person name="Feldmann H."/>
            <person name="Fernandes L."/>
            <person name="Fobo G.M."/>
            <person name="Fritz C."/>
            <person name="Fukuhara H."/>
            <person name="Gabel C."/>
            <person name="Gaillon L."/>
            <person name="Garcia-Cantalejo J.M."/>
            <person name="Garcia-Ramirez J.J."/>
            <person name="Gent M.E."/>
            <person name="Ghazvini M."/>
            <person name="Goffeau A."/>
            <person name="Gonzalez A."/>
            <person name="Grothues D."/>
            <person name="Guerreiro P."/>
            <person name="Hegemann J.H."/>
            <person name="Hewitt N."/>
            <person name="Hilger F."/>
            <person name="Hollenberg C.P."/>
            <person name="Horaitis O."/>
            <person name="Indge K.J."/>
            <person name="Jacquier A."/>
            <person name="James C.M."/>
            <person name="Jauniaux J.-C."/>
            <person name="Jimenez A."/>
            <person name="Keuchel H."/>
            <person name="Kirchrath L."/>
            <person name="Kleine K."/>
            <person name="Koetter P."/>
            <person name="Legrain P."/>
            <person name="Liebl S."/>
            <person name="Louis E.J."/>
            <person name="Maia e Silva A."/>
            <person name="Marck C."/>
            <person name="Monnier A.-L."/>
            <person name="Moestl D."/>
            <person name="Mueller S."/>
            <person name="Obermaier B."/>
            <person name="Oliver S.G."/>
            <person name="Pallier C."/>
            <person name="Pascolo S."/>
            <person name="Pfeiffer F."/>
            <person name="Philippsen P."/>
            <person name="Planta R.J."/>
            <person name="Pohl F.M."/>
            <person name="Pohl T.M."/>
            <person name="Poehlmann R."/>
            <person name="Portetelle D."/>
            <person name="Purnelle B."/>
            <person name="Puzos V."/>
            <person name="Ramezani Rad M."/>
            <person name="Rasmussen S.W."/>
            <person name="Remacha M.A."/>
            <person name="Revuelta J.L."/>
            <person name="Richard G.-F."/>
            <person name="Rieger M."/>
            <person name="Rodrigues-Pousada C."/>
            <person name="Rose M."/>
            <person name="Rupp T."/>
            <person name="Santos M.A."/>
            <person name="Schwager C."/>
            <person name="Sensen C."/>
            <person name="Skala J."/>
            <person name="Soares H."/>
            <person name="Sor F."/>
            <person name="Stegemann J."/>
            <person name="Tettelin H."/>
            <person name="Thierry A."/>
            <person name="Tzermia M."/>
            <person name="Urrestarazu L.A."/>
            <person name="van Dyck L."/>
            <person name="van Vliet-Reedijk J.C."/>
            <person name="Valens M."/>
            <person name="Vandenbol M."/>
            <person name="Vilela C."/>
            <person name="Vissers S."/>
            <person name="von Wettstein D."/>
            <person name="Voss H."/>
            <person name="Wiemann S."/>
            <person name="Xu G."/>
            <person name="Zimmermann J."/>
            <person name="Haasemann M."/>
            <person name="Becker I."/>
            <person name="Mewes H.-W."/>
        </authorList>
    </citation>
    <scope>NUCLEOTIDE SEQUENCE [LARGE SCALE GENOMIC DNA]</scope>
    <source>
        <strain>ATCC 204508 / S288c</strain>
    </source>
</reference>
<reference key="3">
    <citation type="journal article" date="2014" name="G3 (Bethesda)">
        <title>The reference genome sequence of Saccharomyces cerevisiae: Then and now.</title>
        <authorList>
            <person name="Engel S.R."/>
            <person name="Dietrich F.S."/>
            <person name="Fisk D.G."/>
            <person name="Binkley G."/>
            <person name="Balakrishnan R."/>
            <person name="Costanzo M.C."/>
            <person name="Dwight S.S."/>
            <person name="Hitz B.C."/>
            <person name="Karra K."/>
            <person name="Nash R.S."/>
            <person name="Weng S."/>
            <person name="Wong E.D."/>
            <person name="Lloyd P."/>
            <person name="Skrzypek M.S."/>
            <person name="Miyasato S.R."/>
            <person name="Simison M."/>
            <person name="Cherry J.M."/>
        </authorList>
    </citation>
    <scope>GENOME REANNOTATION</scope>
    <scope>SEQUENCE REVISION TO 343-350 AND 694-702</scope>
    <source>
        <strain>ATCC 204508 / S288c</strain>
    </source>
</reference>
<reference key="4">
    <citation type="journal article" date="1995" name="J. Biol. Chem.">
        <title>Prediction and identification of new natural substrates of the yeast mitochondrial intermediate peptidase.</title>
        <authorList>
            <person name="Branda S.S."/>
            <person name="Isaya G."/>
        </authorList>
    </citation>
    <scope>FUNCTION</scope>
</reference>
<reference key="5">
    <citation type="journal article" date="1996" name="Biochem. Biophys. Res. Commun.">
        <title>Mutations in a putative zinc-binding domain inactivate the mitochondrial intermediate peptidase.</title>
        <authorList>
            <person name="Chew A."/>
            <person name="Rollins R.A."/>
            <person name="Sakati W.R."/>
            <person name="Isaya G."/>
        </authorList>
    </citation>
    <scope>MUTAGENESIS OF CYS-131; PHE-557; HIS-558; GLU-559; GLY-561; HIS-562; HIS-565; GLY-578; CYS-581; ASP-584; GLU-587; PRO-589; SER-590 AND GLU-594</scope>
    <scope>SUBCELLULAR LOCATION</scope>
</reference>
<reference key="6">
    <citation type="journal article" date="1999" name="Hum. Mol. Genet.">
        <title>Mitochondrial intermediate peptidase and the yeast frataxin homolog together maintain mitochondrial iron homeostasis in Saccharomyces cerevisiae.</title>
        <authorList>
            <person name="Branda S.S."/>
            <person name="Yang Z.Y."/>
            <person name="Chew A."/>
            <person name="Isaya G."/>
        </authorList>
    </citation>
    <scope>ACTIVITY REGULATION</scope>
</reference>
<reference key="7">
    <citation type="journal article" date="2003" name="Nature">
        <title>Global analysis of protein localization in budding yeast.</title>
        <authorList>
            <person name="Huh W.-K."/>
            <person name="Falvo J.V."/>
            <person name="Gerke L.C."/>
            <person name="Carroll A.S."/>
            <person name="Howson R.W."/>
            <person name="Weissman J.S."/>
            <person name="O'Shea E.K."/>
        </authorList>
    </citation>
    <scope>SUBCELLULAR LOCATION [LARGE SCALE ANALYSIS]</scope>
</reference>
<reference key="8">
    <citation type="journal article" date="2003" name="Nature">
        <title>Global analysis of protein expression in yeast.</title>
        <authorList>
            <person name="Ghaemmaghami S."/>
            <person name="Huh W.-K."/>
            <person name="Bower K."/>
            <person name="Howson R.W."/>
            <person name="Belle A."/>
            <person name="Dephoure N."/>
            <person name="O'Shea E.K."/>
            <person name="Weissman J.S."/>
        </authorList>
    </citation>
    <scope>LEVEL OF PROTEIN EXPRESSION [LARGE SCALE ANALYSIS]</scope>
</reference>
<reference key="9">
    <citation type="journal article" date="2006" name="J. Proteome Res.">
        <title>Toward the complete yeast mitochondrial proteome: multidimensional separation techniques for mitochondrial proteomics.</title>
        <authorList>
            <person name="Reinders J."/>
            <person name="Zahedi R.P."/>
            <person name="Pfanner N."/>
            <person name="Meisinger C."/>
            <person name="Sickmann A."/>
        </authorList>
    </citation>
    <scope>SUBCELLULAR LOCATION [LARGE SCALE ANALYSIS]</scope>
    <scope>IDENTIFICATION BY MASS SPECTROMETRY</scope>
</reference>
<reference key="10">
    <citation type="journal article" date="2014" name="Cell Metab.">
        <title>Amyloid-beta peptide induces mitochondrial dysfunction by inhibition of preprotein maturation.</title>
        <authorList>
            <person name="Mossmann D."/>
            <person name="Voegtle F.N."/>
            <person name="Taskin A.A."/>
            <person name="Teixeira P.F."/>
            <person name="Ring J."/>
            <person name="Burkhart J.M."/>
            <person name="Burger N."/>
            <person name="Pinho C.M."/>
            <person name="Tadic J."/>
            <person name="Loreth D."/>
            <person name="Graff C."/>
            <person name="Metzger F."/>
            <person name="Sickmann A."/>
            <person name="Kretz O."/>
            <person name="Wiedemann N."/>
            <person name="Zahedi R.P."/>
            <person name="Madeo F."/>
            <person name="Glaser E."/>
            <person name="Meisinger C."/>
        </authorList>
    </citation>
    <scope>DISRUPTION PHENOTYPE</scope>
</reference>
<organism>
    <name type="scientific">Saccharomyces cerevisiae (strain ATCC 204508 / S288c)</name>
    <name type="common">Baker's yeast</name>
    <dbReference type="NCBI Taxonomy" id="559292"/>
    <lineage>
        <taxon>Eukaryota</taxon>
        <taxon>Fungi</taxon>
        <taxon>Dikarya</taxon>
        <taxon>Ascomycota</taxon>
        <taxon>Saccharomycotina</taxon>
        <taxon>Saccharomycetes</taxon>
        <taxon>Saccharomycetales</taxon>
        <taxon>Saccharomycetaceae</taxon>
        <taxon>Saccharomyces</taxon>
    </lineage>
</organism>
<accession>P35999</accession>
<accession>D6VX62</accession>
<accession>P51980</accession>
<name>PMIP_YEAST</name>
<proteinExistence type="evidence at protein level"/>
<sequence length="772" mass="88183">MLRTIILKAGSNASIPSPSRQNKLLRFFATAGAVSRTSPGSIKKIFDDNSYWRNINGQDANNSKISQYLFKKNKTGLFKNPYLTSPDGLRKFSQVSLQQAQELLDKMRNDFSESGKLTYIMNLDRLSDTLCRVIDLCEFIRSTHPDDAFVRAAQDCHEQMFEFMNVLNTDVSLCNILKSVLNNPEVSSKLSAEELKVGKILLDDFEKSGIYMNPDVREKFIQLSQEISLVGQEFINHTDYPGSNSVKIPCKDLDNSKVSTFLLKQLNKDVKGQNYKVPTFGYAAYALLKSCENEMVRKKLWTALHSCSDKQVKRLSHLIKLRAILANLMHKTSYAEYQLEGKMAKNPKDVQDFILTLMNNTIEKTANELKFIAELKAKDLKKPLTTNTDEILKLVRPWDRDYYTGKYFQLNPSNSPNAKEISYYFTLGNVIQGLSDLFQQIYGIRLEPAITDEGETWSPDVRRLNVISEEEGIIGIIYCDLFERNGKTSNPAHFTVCCSRQIYPSETDFSTIQVGENPDGTYFQLPVISLVCNFSPILIASKKSLCFLQLSEVETLFHEMGHAMHSMLGRTHMQNISGTRCATDFVELPSILMEHFAKDIRILTKIGKHYGTGETIQADMLQRFMKSTNFLQNCETYSQAKMAMLDQSFHDEKIISDIDNFDVVENYQALERRLKVLVDDQSNWCGRFGHLFGYGATYYSYLFDRTIASKIWYALFEDDPYSRKNGDKFKKHLLKWGGLKDPWKCIADVLECPMLEKGGSDAMEFIAQSHKS</sequence>
<comment type="function">
    <text evidence="9 10">Cleaves proteins, imported into the mitochondrion, to their mature size. While most mitochondrial precursor proteins are processed to the mature form in one step by mitochondrial processing peptidase (MPP), the sequential cleavage by MIP of an octapeptide after initial processing by MPP is a required step for a subgroup of nuclear-encoded precursor proteins destined for the matrix or the inner membrane. Cleaves precursor proteins of respiratory components, including subunits of the electron transport chain and tricarboxylic acid cycle enzymes, and components of the mitochondrial genetic machinery, including ribosomal proteins, translation factors, and proteins required for mitochondrial DNA metabolism.</text>
</comment>
<comment type="catalytic activity">
    <reaction>
        <text>Release of an N-terminal octapeptide as second stage of processing of some proteins imported into the mitochondrion.</text>
        <dbReference type="EC" id="3.4.24.59"/>
    </reaction>
</comment>
<comment type="cofactor">
    <cofactor evidence="1">
        <name>Zn(2+)</name>
        <dbReference type="ChEBI" id="CHEBI:29105"/>
    </cofactor>
    <text evidence="1">Binds 1 zinc ion.</text>
</comment>
<comment type="activity regulation">
    <text evidence="4">Stimulated by Fe(2+).</text>
</comment>
<comment type="subcellular location">
    <subcellularLocation>
        <location evidence="5 7 11">Mitochondrion matrix</location>
    </subcellularLocation>
</comment>
<comment type="disruption phenotype">
    <text evidence="8">Simultaneous disruption of the mitochondrial presequence protease CYM1 results in synthetic lethality in respiratory conditions.</text>
</comment>
<comment type="miscellaneous">
    <text evidence="6">Present with 2690 molecules/cell in log phase SD medium.</text>
</comment>
<comment type="similarity">
    <text evidence="12">Belongs to the peptidase M3 family.</text>
</comment>